<organism>
    <name type="scientific">Carnation mottle virus (isolate China/Shanghai)</name>
    <name type="common">CarMV</name>
    <dbReference type="NCBI Taxonomy" id="652111"/>
    <lineage>
        <taxon>Viruses</taxon>
        <taxon>Riboviria</taxon>
        <taxon>Orthornavirae</taxon>
        <taxon>Kitrinoviricota</taxon>
        <taxon>Tolucaviricetes</taxon>
        <taxon>Tolivirales</taxon>
        <taxon>Tombusviridae</taxon>
        <taxon>Procedovirinae</taxon>
        <taxon>Alphacarmovirus</taxon>
        <taxon>Alphacarmovirus dianthi</taxon>
    </lineage>
</organism>
<name>MP2_CARMS</name>
<reference key="1">
    <citation type="submission" date="1999-10" db="EMBL/GenBank/DDBJ databases">
        <title>Infectivity of full-length cDNA of carnation mottle virus.</title>
        <authorList>
            <person name="Zhang A.P."/>
            <person name="Yue Y."/>
            <person name="Ye R."/>
            <person name="Zhu H.Q."/>
            <person name="Xu L."/>
            <person name="Yu S.Q."/>
        </authorList>
    </citation>
    <scope>NUCLEOTIDE SEQUENCE [GENOMIC RNA]</scope>
</reference>
<evidence type="ECO:0000255" key="1"/>
<evidence type="ECO:0000305" key="2"/>
<proteinExistence type="inferred from homology"/>
<comment type="function">
    <text evidence="2">Cell-to-cell movement function.</text>
</comment>
<comment type="subcellular location">
    <subcellularLocation>
        <location>Host endoplasmic reticulum membrane</location>
        <topology>Multi-pass membrane protein</topology>
    </subcellularLocation>
</comment>
<comment type="similarity">
    <text evidence="2">Belongs to the carmovirus double gene block protein 2 family.</text>
</comment>
<protein>
    <recommendedName>
        <fullName>Double gene block protein 2</fullName>
        <shortName>DGBp2</shortName>
    </recommendedName>
    <alternativeName>
        <fullName>Movement protein P9</fullName>
    </alternativeName>
</protein>
<dbReference type="EMBL" id="AF192772">
    <property type="status" value="NOT_ANNOTATED_CDS"/>
    <property type="molecule type" value="Genomic_RNA"/>
</dbReference>
<dbReference type="Proteomes" id="UP000006709">
    <property type="component" value="Genome"/>
</dbReference>
<dbReference type="GO" id="GO:0044167">
    <property type="term" value="C:host cell endoplasmic reticulum membrane"/>
    <property type="evidence" value="ECO:0007669"/>
    <property type="project" value="UniProtKB-SubCell"/>
</dbReference>
<dbReference type="GO" id="GO:0016020">
    <property type="term" value="C:membrane"/>
    <property type="evidence" value="ECO:0007669"/>
    <property type="project" value="UniProtKB-KW"/>
</dbReference>
<dbReference type="GO" id="GO:0046740">
    <property type="term" value="P:transport of virus in host, cell to cell"/>
    <property type="evidence" value="ECO:0007669"/>
    <property type="project" value="UniProtKB-KW"/>
</dbReference>
<keyword id="KW-1038">Host endoplasmic reticulum</keyword>
<keyword id="KW-1043">Host membrane</keyword>
<keyword id="KW-0472">Membrane</keyword>
<keyword id="KW-1185">Reference proteome</keyword>
<keyword id="KW-0812">Transmembrane</keyword>
<keyword id="KW-1133">Transmembrane helix</keyword>
<keyword id="KW-0813">Transport</keyword>
<keyword id="KW-0916">Viral movement protein</keyword>
<gene>
    <name type="ORF">ORF3</name>
</gene>
<feature type="chain" id="PRO_0000398306" description="Double gene block protein 2">
    <location>
        <begin position="1"/>
        <end position="84"/>
    </location>
</feature>
<feature type="topological domain" description="Lumenal" evidence="1">
    <location>
        <begin position="1"/>
        <end position="4"/>
    </location>
</feature>
<feature type="transmembrane region" description="Helical; Note=Internal signal sequence" evidence="1">
    <location>
        <begin position="5"/>
        <end position="25"/>
    </location>
</feature>
<feature type="topological domain" description="Cytoplasmic" evidence="1">
    <location>
        <begin position="26"/>
        <end position="30"/>
    </location>
</feature>
<feature type="transmembrane region" description="Helical" evidence="1">
    <location>
        <begin position="31"/>
        <end position="51"/>
    </location>
</feature>
<feature type="topological domain" description="Lumenal" evidence="1">
    <location>
        <begin position="52"/>
        <end position="84"/>
    </location>
</feature>
<organismHost>
    <name type="scientific">Dianthus barbatus</name>
    <dbReference type="NCBI Taxonomy" id="278075"/>
</organismHost>
<organismHost>
    <name type="scientific">Dianthus caryophyllus</name>
    <name type="common">Carnation</name>
    <name type="synonym">Clove pink</name>
    <dbReference type="NCBI Taxonomy" id="3570"/>
</organismHost>
<organismHost>
    <name type="scientific">Dianthus chinensis</name>
    <dbReference type="NCBI Taxonomy" id="118431"/>
</organismHost>
<organismHost>
    <name type="scientific">Dianthus superbus</name>
    <dbReference type="NCBI Taxonomy" id="288950"/>
</organismHost>
<organismHost>
    <name type="scientific">Saponaria officinalis</name>
    <name type="common">Common soapwort</name>
    <name type="synonym">Lychnis saponaria</name>
    <dbReference type="NCBI Taxonomy" id="3572"/>
</organismHost>
<sequence length="84" mass="9211">MPSANLHPIVLTGVIGLMLLIRLRCTFTSTFSLPPLVTLNQIIALSFCGLLLNSISRAERACYYNYSVDSSKQQHISISTPNGK</sequence>
<accession>P0C778</accession>